<name>YL462_YEAST</name>
<dbReference type="EMBL" id="U22383">
    <property type="protein sequence ID" value="AAB64725.1"/>
    <property type="molecule type" value="Genomic_DNA"/>
</dbReference>
<dbReference type="EMBL" id="BK006945">
    <property type="protein sequence ID" value="DAA09761.1"/>
    <property type="molecule type" value="Genomic_DNA"/>
</dbReference>
<dbReference type="RefSeq" id="NP_013567.3">
    <property type="nucleotide sequence ID" value="NM_001182350.3"/>
</dbReference>
<dbReference type="BioGRID" id="31720">
    <property type="interactions" value="3"/>
</dbReference>
<dbReference type="DIP" id="DIP-2831N"/>
<dbReference type="FunCoup" id="O13556">
    <property type="interactions" value="50"/>
</dbReference>
<dbReference type="IntAct" id="O13556">
    <property type="interactions" value="2"/>
</dbReference>
<dbReference type="MINT" id="O13556"/>
<dbReference type="STRING" id="4932.YLR462W"/>
<dbReference type="PaxDb" id="4932-YLR462W"/>
<dbReference type="PeptideAtlas" id="O13556"/>
<dbReference type="EnsemblFungi" id="YLR462W_mRNA">
    <property type="protein sequence ID" value="YLR462W"/>
    <property type="gene ID" value="YLR462W"/>
</dbReference>
<dbReference type="GeneID" id="851184"/>
<dbReference type="KEGG" id="sce:YLR462W"/>
<dbReference type="AGR" id="SGD:S000004454"/>
<dbReference type="SGD" id="S000004454">
    <property type="gene designation" value="YLR462W"/>
</dbReference>
<dbReference type="VEuPathDB" id="FungiDB:YLR462W"/>
<dbReference type="GeneTree" id="ENSGT00940000153173"/>
<dbReference type="HOGENOM" id="CLU_092906_0_0_1"/>
<dbReference type="InParanoid" id="O13556"/>
<dbReference type="BioCyc" id="YEAST:G3O-32514-MONOMER"/>
<dbReference type="Proteomes" id="UP000002311">
    <property type="component" value="Chromosome XII"/>
</dbReference>
<dbReference type="RNAct" id="O13556">
    <property type="molecule type" value="protein"/>
</dbReference>
<dbReference type="InterPro" id="IPR021646">
    <property type="entry name" value="Sir1_ORC-binding"/>
</dbReference>
<dbReference type="InterPro" id="IPR050978">
    <property type="entry name" value="Y'_ATP-dependent_helicase"/>
</dbReference>
<dbReference type="PANTHER" id="PTHR31583">
    <property type="match status" value="1"/>
</dbReference>
<dbReference type="PANTHER" id="PTHR31583:SF2">
    <property type="match status" value="1"/>
</dbReference>
<dbReference type="Pfam" id="PF11603">
    <property type="entry name" value="Sir1"/>
    <property type="match status" value="1"/>
</dbReference>
<sequence length="202" mass="23494">MKVSDRRKFEKANFDEFESALNNKNDLVHCPSITLFESIPTEVRSFYEDEKSGLIKVVKFRTGAMDRKRSFEKVVISVMVGKNVKKFLTFVEDEPDFQGGPIPSKYLVPKKINLMVYTLFQVHTLKFNRKDYDTLSLFYLNRGYYNELSFRVLERCHEIASARPNDSSTMRTFTDFVSGAPIVRSLQKSTIRKYGYNLAAYT</sequence>
<proteinExistence type="uncertain"/>
<accession>O13556</accession>
<accession>D6VZ95</accession>
<reference key="1">
    <citation type="journal article" date="1997" name="Nature">
        <title>The nucleotide sequence of Saccharomyces cerevisiae chromosome XII.</title>
        <authorList>
            <person name="Johnston M."/>
            <person name="Hillier L.W."/>
            <person name="Riles L."/>
            <person name="Albermann K."/>
            <person name="Andre B."/>
            <person name="Ansorge W."/>
            <person name="Benes V."/>
            <person name="Brueckner M."/>
            <person name="Delius H."/>
            <person name="Dubois E."/>
            <person name="Duesterhoeft A."/>
            <person name="Entian K.-D."/>
            <person name="Floeth M."/>
            <person name="Goffeau A."/>
            <person name="Hebling U."/>
            <person name="Heumann K."/>
            <person name="Heuss-Neitzel D."/>
            <person name="Hilbert H."/>
            <person name="Hilger F."/>
            <person name="Kleine K."/>
            <person name="Koetter P."/>
            <person name="Louis E.J."/>
            <person name="Messenguy F."/>
            <person name="Mewes H.-W."/>
            <person name="Miosga T."/>
            <person name="Moestl D."/>
            <person name="Mueller-Auer S."/>
            <person name="Nentwich U."/>
            <person name="Obermaier B."/>
            <person name="Piravandi E."/>
            <person name="Pohl T.M."/>
            <person name="Portetelle D."/>
            <person name="Purnelle B."/>
            <person name="Rechmann S."/>
            <person name="Rieger M."/>
            <person name="Rinke M."/>
            <person name="Rose M."/>
            <person name="Scharfe M."/>
            <person name="Scherens B."/>
            <person name="Scholler P."/>
            <person name="Schwager C."/>
            <person name="Schwarz S."/>
            <person name="Underwood A.P."/>
            <person name="Urrestarazu L.A."/>
            <person name="Vandenbol M."/>
            <person name="Verhasselt P."/>
            <person name="Vierendeels F."/>
            <person name="Voet M."/>
            <person name="Volckaert G."/>
            <person name="Voss H."/>
            <person name="Wambutt R."/>
            <person name="Wedler E."/>
            <person name="Wedler H."/>
            <person name="Zimmermann F.K."/>
            <person name="Zollner A."/>
            <person name="Hani J."/>
            <person name="Hoheisel J.D."/>
        </authorList>
    </citation>
    <scope>NUCLEOTIDE SEQUENCE [LARGE SCALE GENOMIC DNA]</scope>
    <source>
        <strain>ATCC 204508 / S288c</strain>
    </source>
</reference>
<reference key="2">
    <citation type="journal article" date="2014" name="G3 (Bethesda)">
        <title>The reference genome sequence of Saccharomyces cerevisiae: Then and now.</title>
        <authorList>
            <person name="Engel S.R."/>
            <person name="Dietrich F.S."/>
            <person name="Fisk D.G."/>
            <person name="Binkley G."/>
            <person name="Balakrishnan R."/>
            <person name="Costanzo M.C."/>
            <person name="Dwight S.S."/>
            <person name="Hitz B.C."/>
            <person name="Karra K."/>
            <person name="Nash R.S."/>
            <person name="Weng S."/>
            <person name="Wong E.D."/>
            <person name="Lloyd P."/>
            <person name="Skrzypek M.S."/>
            <person name="Miyasato S.R."/>
            <person name="Simison M."/>
            <person name="Cherry J.M."/>
        </authorList>
    </citation>
    <scope>GENOME REANNOTATION</scope>
    <source>
        <strain>ATCC 204508 / S288c</strain>
    </source>
</reference>
<protein>
    <recommendedName>
        <fullName>Putative uncharacterized protein YLR462W</fullName>
    </recommendedName>
</protein>
<evidence type="ECO:0000305" key="1"/>
<comment type="similarity">
    <text evidence="1">Belongs to the helicase family. Yeast subtelomeric Y' repeat subfamily.</text>
</comment>
<comment type="caution">
    <text evidence="1">Could be the product of a pseudogene. Although strongly related to DNA helicases, it lacks the helicase domains, suggesting that it has no helicase activity.</text>
</comment>
<organism>
    <name type="scientific">Saccharomyces cerevisiae (strain ATCC 204508 / S288c)</name>
    <name type="common">Baker's yeast</name>
    <dbReference type="NCBI Taxonomy" id="559292"/>
    <lineage>
        <taxon>Eukaryota</taxon>
        <taxon>Fungi</taxon>
        <taxon>Dikarya</taxon>
        <taxon>Ascomycota</taxon>
        <taxon>Saccharomycotina</taxon>
        <taxon>Saccharomycetes</taxon>
        <taxon>Saccharomycetales</taxon>
        <taxon>Saccharomycetaceae</taxon>
        <taxon>Saccharomyces</taxon>
    </lineage>
</organism>
<gene>
    <name type="ordered locus">YLR462W</name>
</gene>
<feature type="chain" id="PRO_0000268171" description="Putative uncharacterized protein YLR462W">
    <location>
        <begin position="1"/>
        <end position="202"/>
    </location>
</feature>
<keyword id="KW-1185">Reference proteome</keyword>